<reference key="1">
    <citation type="journal article" date="1986" name="Gene">
        <title>Structure of wheat gamma-gliadin genes.</title>
        <authorList>
            <person name="Rafalski J.A."/>
        </authorList>
    </citation>
    <scope>NUCLEOTIDE SEQUENCE [GENOMIC DNA]</scope>
</reference>
<organism>
    <name type="scientific">Triticum aestivum</name>
    <name type="common">Wheat</name>
    <dbReference type="NCBI Taxonomy" id="4565"/>
    <lineage>
        <taxon>Eukaryota</taxon>
        <taxon>Viridiplantae</taxon>
        <taxon>Streptophyta</taxon>
        <taxon>Embryophyta</taxon>
        <taxon>Tracheophyta</taxon>
        <taxon>Spermatophyta</taxon>
        <taxon>Magnoliopsida</taxon>
        <taxon>Liliopsida</taxon>
        <taxon>Poales</taxon>
        <taxon>Poaceae</taxon>
        <taxon>BOP clade</taxon>
        <taxon>Pooideae</taxon>
        <taxon>Triticodae</taxon>
        <taxon>Triticeae</taxon>
        <taxon>Triticinae</taxon>
        <taxon>Triticum</taxon>
    </lineage>
</organism>
<comment type="function">
    <text>Gliadin is the major seed storage protein in wheat.</text>
</comment>
<comment type="miscellaneous">
    <text>The gamma-gliadins can be divided into 3 homology classes. Sequence divergence between the classes is due to single-base substitutions and to duplications or deletions within or near direct repeats.</text>
</comment>
<comment type="similarity">
    <text evidence="2">Belongs to the gliadin/glutenin family.</text>
</comment>
<protein>
    <recommendedName>
        <fullName>Gamma-gliadin B</fullName>
    </recommendedName>
</protein>
<sequence length="291" mass="32967">MKTLLILTILAMAITIATANMQADPSGQVQWPQQQPFLQPHQPFSQQPQQIFPQPQQTFPHQPQQQFPQPQQPQQQFLQPRQPFPQQPQQPYPQQPQQPFPQTQQPQQPFPQSKQPQQPFPQPQQPQQSFPQQQPSLIQQSLQQQLNPCKNFLLQQCKPVSLVSSLWSIILPPSDCQVMRQQCCQQLAQIPQQLQCAAIHSVVHSIIMQQEQQEQLQGVQILVPLSQQQQVGQGILVQGQGIIQPQQPAQLEVIRSLVLQTLPTMCNVYVPPYCSTIRAPFASIVASIGGQ</sequence>
<dbReference type="EMBL" id="M13713">
    <property type="protein sequence ID" value="AAA34274.1"/>
    <property type="molecule type" value="Genomic_DNA"/>
</dbReference>
<dbReference type="PIR" id="A25632">
    <property type="entry name" value="EEWTG"/>
</dbReference>
<dbReference type="RefSeq" id="NP_001392897.1">
    <property type="nucleotide sequence ID" value="NM_001405968.1"/>
</dbReference>
<dbReference type="STRING" id="4565.P06659"/>
<dbReference type="EnsemblPlants" id="TraesARI1B03G00187150.1">
    <property type="protein sequence ID" value="TraesARI1B03G00187150.1.CDS1"/>
    <property type="gene ID" value="TraesARI1B03G00187150"/>
</dbReference>
<dbReference type="EnsemblPlants" id="TraesCLE_scaffold_038702_01G000200.1">
    <property type="protein sequence ID" value="TraesCLE_scaffold_038702_01G000200.1"/>
    <property type="gene ID" value="TraesCLE_scaffold_038702_01G000200"/>
</dbReference>
<dbReference type="EnsemblPlants" id="TraesCS1B02G011000.1">
    <property type="protein sequence ID" value="TraesCS1B02G011000.1.cds1"/>
    <property type="gene ID" value="TraesCS1B02G011000"/>
</dbReference>
<dbReference type="EnsemblPlants" id="TraesCS1B03G0020600.1">
    <property type="protein sequence ID" value="TraesCS1B03G0020600.1.CDS1"/>
    <property type="gene ID" value="TraesCS1B03G0020600"/>
</dbReference>
<dbReference type="EnsemblPlants" id="TraesJUL1B03G00182210.1">
    <property type="protein sequence ID" value="TraesJUL1B03G00182210.1.CDS1"/>
    <property type="gene ID" value="TraesJUL1B03G00182210"/>
</dbReference>
<dbReference type="EnsemblPlants" id="TraesLDM1B03G00184770.1">
    <property type="protein sequence ID" value="TraesLDM1B03G00184770.1.CDS1"/>
    <property type="gene ID" value="TraesLDM1B03G00184770"/>
</dbReference>
<dbReference type="EnsemblPlants" id="TraesPARA_EIv1.0_0104550.1">
    <property type="protein sequence ID" value="TraesPARA_EIv1.0_0104550.1.CDS1"/>
    <property type="gene ID" value="TraesPARA_EIv1.0_0104550"/>
</dbReference>
<dbReference type="EnsemblPlants" id="TraesROB_scaffold_025808_01G000400.1">
    <property type="protein sequence ID" value="TraesROB_scaffold_025808_01G000400.1"/>
    <property type="gene ID" value="TraesROB_scaffold_025808_01G000400"/>
</dbReference>
<dbReference type="EnsemblPlants" id="TraesSTA1B03G00183220.1">
    <property type="protein sequence ID" value="TraesSTA1B03G00183220.1.CDS1"/>
    <property type="gene ID" value="TraesSTA1B03G00183220"/>
</dbReference>
<dbReference type="EnsemblPlants" id="TraesSYM1B03G00188360.1">
    <property type="protein sequence ID" value="TraesSYM1B03G00188360.1.CDS1"/>
    <property type="gene ID" value="TraesSYM1B03G00188360"/>
</dbReference>
<dbReference type="GeneID" id="101669857"/>
<dbReference type="Gramene" id="TraesARI1B03G00187150.1">
    <property type="protein sequence ID" value="TraesARI1B03G00187150.1.CDS1"/>
    <property type="gene ID" value="TraesARI1B03G00187150"/>
</dbReference>
<dbReference type="Gramene" id="TraesCLE_scaffold_038702_01G000200.1">
    <property type="protein sequence ID" value="TraesCLE_scaffold_038702_01G000200.1"/>
    <property type="gene ID" value="TraesCLE_scaffold_038702_01G000200"/>
</dbReference>
<dbReference type="Gramene" id="TraesCS1B02G011000.1">
    <property type="protein sequence ID" value="TraesCS1B02G011000.1.cds1"/>
    <property type="gene ID" value="TraesCS1B02G011000"/>
</dbReference>
<dbReference type="Gramene" id="TraesCS1B03G0020600.1">
    <property type="protein sequence ID" value="TraesCS1B03G0020600.1.CDS1"/>
    <property type="gene ID" value="TraesCS1B03G0020600"/>
</dbReference>
<dbReference type="Gramene" id="TraesJUL1B03G00182210.1">
    <property type="protein sequence ID" value="TraesJUL1B03G00182210.1.CDS1"/>
    <property type="gene ID" value="TraesJUL1B03G00182210"/>
</dbReference>
<dbReference type="Gramene" id="TraesLDM1B03G00184770.1">
    <property type="protein sequence ID" value="TraesLDM1B03G00184770.1.CDS1"/>
    <property type="gene ID" value="TraesLDM1B03G00184770"/>
</dbReference>
<dbReference type="Gramene" id="TraesPARA_EIv1.0_0104550.1">
    <property type="protein sequence ID" value="TraesPARA_EIv1.0_0104550.1.CDS1"/>
    <property type="gene ID" value="TraesPARA_EIv1.0_0104550"/>
</dbReference>
<dbReference type="Gramene" id="TraesROB_scaffold_025808_01G000400.1">
    <property type="protein sequence ID" value="TraesROB_scaffold_025808_01G000400.1"/>
    <property type="gene ID" value="TraesROB_scaffold_025808_01G000400"/>
</dbReference>
<dbReference type="Gramene" id="TraesSTA1B03G00183220.1">
    <property type="protein sequence ID" value="TraesSTA1B03G00183220.1.CDS1"/>
    <property type="gene ID" value="TraesSTA1B03G00183220"/>
</dbReference>
<dbReference type="Gramene" id="TraesSYM1B03G00188360.1">
    <property type="protein sequence ID" value="TraesSYM1B03G00188360.1.CDS1"/>
    <property type="gene ID" value="TraesSYM1B03G00188360"/>
</dbReference>
<dbReference type="Proteomes" id="UP000019116">
    <property type="component" value="Chromosome 1B"/>
</dbReference>
<dbReference type="ExpressionAtlas" id="P06659">
    <property type="expression patterns" value="baseline and differential"/>
</dbReference>
<dbReference type="GO" id="GO:0045735">
    <property type="term" value="F:nutrient reservoir activity"/>
    <property type="evidence" value="ECO:0007669"/>
    <property type="project" value="UniProtKB-KW"/>
</dbReference>
<dbReference type="CDD" id="cd00261">
    <property type="entry name" value="AAI_SS"/>
    <property type="match status" value="1"/>
</dbReference>
<dbReference type="Gene3D" id="1.10.110.10">
    <property type="entry name" value="Plant lipid-transfer and hydrophobic proteins"/>
    <property type="match status" value="1"/>
</dbReference>
<dbReference type="InterPro" id="IPR036312">
    <property type="entry name" value="Bifun_inhib/LTP/seed_sf"/>
</dbReference>
<dbReference type="InterPro" id="IPR016140">
    <property type="entry name" value="Bifunc_inhib/LTP/seed_store"/>
</dbReference>
<dbReference type="InterPro" id="IPR001954">
    <property type="entry name" value="Glia_glutenin"/>
</dbReference>
<dbReference type="PANTHER" id="PTHR33454:SF16">
    <property type="entry name" value="GAMMA-GLIADIN"/>
    <property type="match status" value="1"/>
</dbReference>
<dbReference type="PANTHER" id="PTHR33454">
    <property type="entry name" value="PROLAMIN PPROL 14P"/>
    <property type="match status" value="1"/>
</dbReference>
<dbReference type="Pfam" id="PF13016">
    <property type="entry name" value="Gliadin"/>
    <property type="match status" value="1"/>
</dbReference>
<dbReference type="PRINTS" id="PR00208">
    <property type="entry name" value="GLIADGLUTEN"/>
</dbReference>
<dbReference type="PRINTS" id="PR00209">
    <property type="entry name" value="GLIADIN"/>
</dbReference>
<dbReference type="SMART" id="SM00499">
    <property type="entry name" value="AAI"/>
    <property type="match status" value="1"/>
</dbReference>
<dbReference type="SUPFAM" id="SSF47699">
    <property type="entry name" value="Bifunctional inhibitor/lipid-transfer protein/seed storage 2S albumin"/>
    <property type="match status" value="1"/>
</dbReference>
<name>GDBB_WHEAT</name>
<keyword id="KW-1185">Reference proteome</keyword>
<keyword id="KW-0677">Repeat</keyword>
<keyword id="KW-0708">Seed storage protein</keyword>
<keyword id="KW-0732">Signal</keyword>
<keyword id="KW-0758">Storage protein</keyword>
<feature type="signal peptide">
    <location>
        <begin position="1"/>
        <end position="19"/>
    </location>
</feature>
<feature type="chain" id="PRO_0000032276" description="Gamma-gliadin B">
    <location>
        <begin position="20"/>
        <end position="291"/>
    </location>
</feature>
<feature type="region of interest" description="Disordered" evidence="1">
    <location>
        <begin position="38"/>
        <end position="137"/>
    </location>
</feature>
<feature type="compositionally biased region" description="Low complexity" evidence="1">
    <location>
        <begin position="38"/>
        <end position="81"/>
    </location>
</feature>
<feature type="compositionally biased region" description="Pro residues" evidence="1">
    <location>
        <begin position="82"/>
        <end position="99"/>
    </location>
</feature>
<feature type="compositionally biased region" description="Low complexity" evidence="1">
    <location>
        <begin position="100"/>
        <end position="117"/>
    </location>
</feature>
<feature type="compositionally biased region" description="Low complexity" evidence="1">
    <location>
        <begin position="125"/>
        <end position="137"/>
    </location>
</feature>
<evidence type="ECO:0000256" key="1">
    <source>
        <dbReference type="SAM" id="MobiDB-lite"/>
    </source>
</evidence>
<evidence type="ECO:0000305" key="2"/>
<proteinExistence type="inferred from homology"/>
<accession>P06659</accession>